<feature type="chain" id="PRO_0000351032" description="DNA-directed RNA polymerase III subunit RPC-3">
    <location>
        <begin position="1"/>
        <end position="653"/>
    </location>
</feature>
<feature type="region of interest" description="Disordered" evidence="2">
    <location>
        <begin position="141"/>
        <end position="186"/>
    </location>
</feature>
<feature type="region of interest" description="Disordered" evidence="2">
    <location>
        <begin position="280"/>
        <end position="309"/>
    </location>
</feature>
<feature type="region of interest" description="Disordered" evidence="2">
    <location>
        <begin position="422"/>
        <end position="442"/>
    </location>
</feature>
<feature type="region of interest" description="Leucine-zipper">
    <location>
        <begin position="580"/>
        <end position="601"/>
    </location>
</feature>
<feature type="compositionally biased region" description="Basic and acidic residues" evidence="2">
    <location>
        <begin position="159"/>
        <end position="170"/>
    </location>
</feature>
<feature type="compositionally biased region" description="Acidic residues" evidence="2">
    <location>
        <begin position="293"/>
        <end position="309"/>
    </location>
</feature>
<feature type="compositionally biased region" description="Acidic residues" evidence="2">
    <location>
        <begin position="424"/>
        <end position="433"/>
    </location>
</feature>
<gene>
    <name type="primary">RPC-82</name>
    <name type="synonym">RPC-3</name>
    <name type="ORF">CIMG_06297</name>
</gene>
<sequence length="653" mass="74226">MSQYAAELCKLLITDNFGELYALIFIYLLNHGRQPLPRIVQNTHLSPRQVRHGLAVLVQQHLVFHCTSLDDGITYYESNWRSAYNLVRSGKIIQLVEERLGNRAASIVSTLLALGHAKISYLESLPELQPGHERPVKANGINGVHGGEGEDVNGVDNDAENHTDHAHDYQQDGPVREPNGYHDSDPGLQVQTILQQLAAFGFITRVRNQHFQSPEDNFDAALKAAKSNGDSYGLKGNKLEAKLTEDAEKLVKEWTDGRISRALPSASLLRGVKRRLRKDDSSAPRKRLKLDGPLEDDVKDEDDGDDFSDDDYHNDEMAALDPNMVIRVNYEKFNVALRNRRLIELADQNGSAVTSQVYETLLSHIEVQTPTCREHVEAIPEGEEAEQYSVSIRLDTISRDLDIDLDLAGVIAGIIPDNINGIKEDEDDEDEEGGPVSMKRRGPSRNYLVDQHLSFLAAEPSFFCTRRMQAGMITWAVEYRHLAKKLRHLELERLIEARFGGFAVRIVRVLAAKGKLDEKRLQEISLMASKDLRQILGQMASAGFVELQEVPRDAQRQPSRTMYLWFYDPDRVRFMVIEDTYKSMSRCLQRIRVEREKLKFLLEKTERSDVKGNEDRYLSAAELQTLKEWRDTEKLLLGEVARLDELVAVLRDY</sequence>
<evidence type="ECO:0000250" key="1"/>
<evidence type="ECO:0000256" key="2">
    <source>
        <dbReference type="SAM" id="MobiDB-lite"/>
    </source>
</evidence>
<evidence type="ECO:0000305" key="3"/>
<accession>Q1DTR6</accession>
<accession>J3K8E2</accession>
<protein>
    <recommendedName>
        <fullName>DNA-directed RNA polymerase III subunit RPC-3</fullName>
        <shortName>RNA polymerase III subunit C3</shortName>
    </recommendedName>
</protein>
<name>RPC3_COCIM</name>
<reference key="1">
    <citation type="journal article" date="2009" name="Genome Res.">
        <title>Comparative genomic analyses of the human fungal pathogens Coccidioides and their relatives.</title>
        <authorList>
            <person name="Sharpton T.J."/>
            <person name="Stajich J.E."/>
            <person name="Rounsley S.D."/>
            <person name="Gardner M.J."/>
            <person name="Wortman J.R."/>
            <person name="Jordar V.S."/>
            <person name="Maiti R."/>
            <person name="Kodira C.D."/>
            <person name="Neafsey D.E."/>
            <person name="Zeng Q."/>
            <person name="Hung C.-Y."/>
            <person name="McMahan C."/>
            <person name="Muszewska A."/>
            <person name="Grynberg M."/>
            <person name="Mandel M.A."/>
            <person name="Kellner E.M."/>
            <person name="Barker B.M."/>
            <person name="Galgiani J.N."/>
            <person name="Orbach M.J."/>
            <person name="Kirkland T.N."/>
            <person name="Cole G.T."/>
            <person name="Henn M.R."/>
            <person name="Birren B.W."/>
            <person name="Taylor J.W."/>
        </authorList>
    </citation>
    <scope>NUCLEOTIDE SEQUENCE [LARGE SCALE GENOMIC DNA]</scope>
    <source>
        <strain>RS</strain>
    </source>
</reference>
<reference key="2">
    <citation type="journal article" date="2010" name="Genome Res.">
        <title>Population genomic sequencing of Coccidioides fungi reveals recent hybridization and transposon control.</title>
        <authorList>
            <person name="Neafsey D.E."/>
            <person name="Barker B.M."/>
            <person name="Sharpton T.J."/>
            <person name="Stajich J.E."/>
            <person name="Park D.J."/>
            <person name="Whiston E."/>
            <person name="Hung C.-Y."/>
            <person name="McMahan C."/>
            <person name="White J."/>
            <person name="Sykes S."/>
            <person name="Heiman D."/>
            <person name="Young S."/>
            <person name="Zeng Q."/>
            <person name="Abouelleil A."/>
            <person name="Aftuck L."/>
            <person name="Bessette D."/>
            <person name="Brown A."/>
            <person name="FitzGerald M."/>
            <person name="Lui A."/>
            <person name="Macdonald J.P."/>
            <person name="Priest M."/>
            <person name="Orbach M.J."/>
            <person name="Galgiani J.N."/>
            <person name="Kirkland T.N."/>
            <person name="Cole G.T."/>
            <person name="Birren B.W."/>
            <person name="Henn M.R."/>
            <person name="Taylor J.W."/>
            <person name="Rounsley S.D."/>
        </authorList>
    </citation>
    <scope>GENOME REANNOTATION</scope>
    <source>
        <strain>RS</strain>
    </source>
</reference>
<comment type="function">
    <text evidence="1">DNA-dependent RNA polymerase catalyzes the transcription of DNA into RNA using the four ribonucleoside triphosphates as substrates. Specific core component of RNA polymerase III which synthesizes small RNAs, such as 5S rRNA and tRNAs (By similarity).</text>
</comment>
<comment type="subunit">
    <text evidence="1">Component of the RNA polymerase III (Pol III) complex consisting of 17 subunits.</text>
</comment>
<comment type="subcellular location">
    <subcellularLocation>
        <location evidence="1">Nucleus</location>
    </subcellularLocation>
</comment>
<comment type="similarity">
    <text evidence="3">Belongs to the RNA polymerase beta chain family.</text>
</comment>
<keyword id="KW-0240">DNA-directed RNA polymerase</keyword>
<keyword id="KW-0539">Nucleus</keyword>
<keyword id="KW-1185">Reference proteome</keyword>
<keyword id="KW-0804">Transcription</keyword>
<keyword id="KW-0862">Zinc</keyword>
<proteinExistence type="inferred from homology"/>
<dbReference type="EMBL" id="GG704912">
    <property type="protein sequence ID" value="EAS30818.3"/>
    <property type="molecule type" value="Genomic_DNA"/>
</dbReference>
<dbReference type="RefSeq" id="XP_001242401.1">
    <property type="nucleotide sequence ID" value="XM_001242400.2"/>
</dbReference>
<dbReference type="SMR" id="Q1DTR6"/>
<dbReference type="FunCoup" id="Q1DTR6">
    <property type="interactions" value="430"/>
</dbReference>
<dbReference type="STRING" id="246410.Q1DTR6"/>
<dbReference type="GeneID" id="4561612"/>
<dbReference type="KEGG" id="cim:CIMG_06297"/>
<dbReference type="VEuPathDB" id="FungiDB:CIMG_06297"/>
<dbReference type="InParanoid" id="Q1DTR6"/>
<dbReference type="OMA" id="KHRFVRH"/>
<dbReference type="OrthoDB" id="272392at2759"/>
<dbReference type="Proteomes" id="UP000001261">
    <property type="component" value="Unassembled WGS sequence"/>
</dbReference>
<dbReference type="GO" id="GO:0005666">
    <property type="term" value="C:RNA polymerase III complex"/>
    <property type="evidence" value="ECO:0007669"/>
    <property type="project" value="InterPro"/>
</dbReference>
<dbReference type="GO" id="GO:0003697">
    <property type="term" value="F:single-stranded DNA binding"/>
    <property type="evidence" value="ECO:0007669"/>
    <property type="project" value="InterPro"/>
</dbReference>
<dbReference type="GO" id="GO:0006351">
    <property type="term" value="P:DNA-templated transcription"/>
    <property type="evidence" value="ECO:0007669"/>
    <property type="project" value="InterPro"/>
</dbReference>
<dbReference type="Gene3D" id="1.10.10.10">
    <property type="entry name" value="Winged helix-like DNA-binding domain superfamily/Winged helix DNA-binding domain"/>
    <property type="match status" value="2"/>
</dbReference>
<dbReference type="InterPro" id="IPR055207">
    <property type="entry name" value="POLR3C_WHD"/>
</dbReference>
<dbReference type="InterPro" id="IPR013197">
    <property type="entry name" value="RNA_pol_III_RPC82-rel_HTH"/>
</dbReference>
<dbReference type="InterPro" id="IPR008806">
    <property type="entry name" value="RNA_pol_III_Rpc82_C"/>
</dbReference>
<dbReference type="InterPro" id="IPR039748">
    <property type="entry name" value="RPC3"/>
</dbReference>
<dbReference type="InterPro" id="IPR036388">
    <property type="entry name" value="WH-like_DNA-bd_sf"/>
</dbReference>
<dbReference type="PANTHER" id="PTHR12949:SF0">
    <property type="entry name" value="DNA-DIRECTED RNA POLYMERASE III SUBUNIT RPC3"/>
    <property type="match status" value="1"/>
</dbReference>
<dbReference type="PANTHER" id="PTHR12949">
    <property type="entry name" value="RNA POLYMERASE III DNA DIRECTED -RELATED"/>
    <property type="match status" value="1"/>
</dbReference>
<dbReference type="Pfam" id="PF08221">
    <property type="entry name" value="HTH_9"/>
    <property type="match status" value="1"/>
</dbReference>
<dbReference type="Pfam" id="PF22536">
    <property type="entry name" value="POLR3C_WHD"/>
    <property type="match status" value="1"/>
</dbReference>
<dbReference type="Pfam" id="PF05645">
    <property type="entry name" value="RNA_pol_Rpc82"/>
    <property type="match status" value="1"/>
</dbReference>
<organism>
    <name type="scientific">Coccidioides immitis (strain RS)</name>
    <name type="common">Valley fever fungus</name>
    <dbReference type="NCBI Taxonomy" id="246410"/>
    <lineage>
        <taxon>Eukaryota</taxon>
        <taxon>Fungi</taxon>
        <taxon>Dikarya</taxon>
        <taxon>Ascomycota</taxon>
        <taxon>Pezizomycotina</taxon>
        <taxon>Eurotiomycetes</taxon>
        <taxon>Eurotiomycetidae</taxon>
        <taxon>Onygenales</taxon>
        <taxon>Onygenaceae</taxon>
        <taxon>Coccidioides</taxon>
    </lineage>
</organism>